<accession>A0RMM1</accession>
<feature type="chain" id="PRO_1000061770" description="Ribosomal RNA large subunit methyltransferase H">
    <location>
        <begin position="1"/>
        <end position="149"/>
    </location>
</feature>
<feature type="binding site" evidence="1">
    <location>
        <position position="71"/>
    </location>
    <ligand>
        <name>S-adenosyl-L-methionine</name>
        <dbReference type="ChEBI" id="CHEBI:59789"/>
    </ligand>
</feature>
<feature type="binding site" evidence="1">
    <location>
        <position position="98"/>
    </location>
    <ligand>
        <name>S-adenosyl-L-methionine</name>
        <dbReference type="ChEBI" id="CHEBI:59789"/>
    </ligand>
</feature>
<feature type="binding site" evidence="1">
    <location>
        <begin position="117"/>
        <end position="122"/>
    </location>
    <ligand>
        <name>S-adenosyl-L-methionine</name>
        <dbReference type="ChEBI" id="CHEBI:59789"/>
    </ligand>
</feature>
<keyword id="KW-0963">Cytoplasm</keyword>
<keyword id="KW-0489">Methyltransferase</keyword>
<keyword id="KW-0698">rRNA processing</keyword>
<keyword id="KW-0949">S-adenosyl-L-methionine</keyword>
<keyword id="KW-0808">Transferase</keyword>
<gene>
    <name evidence="1" type="primary">rlmH</name>
    <name type="ordered locus">CFF8240_0250</name>
</gene>
<evidence type="ECO:0000255" key="1">
    <source>
        <dbReference type="HAMAP-Rule" id="MF_00658"/>
    </source>
</evidence>
<organism>
    <name type="scientific">Campylobacter fetus subsp. fetus (strain 82-40)</name>
    <dbReference type="NCBI Taxonomy" id="360106"/>
    <lineage>
        <taxon>Bacteria</taxon>
        <taxon>Pseudomonadati</taxon>
        <taxon>Campylobacterota</taxon>
        <taxon>Epsilonproteobacteria</taxon>
        <taxon>Campylobacterales</taxon>
        <taxon>Campylobacteraceae</taxon>
        <taxon>Campylobacter</taxon>
    </lineage>
</organism>
<sequence length="149" mass="17096">MQILVHCIQKKDDDFDNIKEYIKMSSKWADIKDINKFNSQIAKAQSASKEQAHKAYDLAYEHCLNGYCIGLDEKGYHLDSVEFADLLKNSSQISFFIGGAYGLSPQFKTKMNRLISLSKMTLAHKIAKLMLFEQIFRGLCINANHPYHK</sequence>
<protein>
    <recommendedName>
        <fullName evidence="1">Ribosomal RNA large subunit methyltransferase H</fullName>
        <ecNumber evidence="1">2.1.1.177</ecNumber>
    </recommendedName>
    <alternativeName>
        <fullName evidence="1">23S rRNA (pseudouridine1915-N3)-methyltransferase</fullName>
    </alternativeName>
    <alternativeName>
        <fullName evidence="1">23S rRNA m3Psi1915 methyltransferase</fullName>
    </alternativeName>
    <alternativeName>
        <fullName evidence="1">rRNA (pseudouridine-N3-)-methyltransferase RlmH</fullName>
    </alternativeName>
</protein>
<dbReference type="EC" id="2.1.1.177" evidence="1"/>
<dbReference type="EMBL" id="CP000487">
    <property type="protein sequence ID" value="ABK82853.1"/>
    <property type="molecule type" value="Genomic_DNA"/>
</dbReference>
<dbReference type="RefSeq" id="WP_011731749.1">
    <property type="nucleotide sequence ID" value="NC_008599.1"/>
</dbReference>
<dbReference type="SMR" id="A0RMM1"/>
<dbReference type="KEGG" id="cff:CFF8240_0250"/>
<dbReference type="eggNOG" id="COG1576">
    <property type="taxonomic scope" value="Bacteria"/>
</dbReference>
<dbReference type="HOGENOM" id="CLU_100552_2_1_7"/>
<dbReference type="Proteomes" id="UP000000760">
    <property type="component" value="Chromosome"/>
</dbReference>
<dbReference type="GO" id="GO:0005737">
    <property type="term" value="C:cytoplasm"/>
    <property type="evidence" value="ECO:0007669"/>
    <property type="project" value="UniProtKB-SubCell"/>
</dbReference>
<dbReference type="GO" id="GO:0070038">
    <property type="term" value="F:rRNA (pseudouridine-N3-)-methyltransferase activity"/>
    <property type="evidence" value="ECO:0007669"/>
    <property type="project" value="UniProtKB-UniRule"/>
</dbReference>
<dbReference type="CDD" id="cd18081">
    <property type="entry name" value="RlmH-like"/>
    <property type="match status" value="1"/>
</dbReference>
<dbReference type="Gene3D" id="3.40.1280.10">
    <property type="match status" value="1"/>
</dbReference>
<dbReference type="HAMAP" id="MF_00658">
    <property type="entry name" value="23SrRNA_methyltr_H"/>
    <property type="match status" value="1"/>
</dbReference>
<dbReference type="InterPro" id="IPR029028">
    <property type="entry name" value="Alpha/beta_knot_MTases"/>
</dbReference>
<dbReference type="InterPro" id="IPR003742">
    <property type="entry name" value="RlmH-like"/>
</dbReference>
<dbReference type="InterPro" id="IPR029026">
    <property type="entry name" value="tRNA_m1G_MTases_N"/>
</dbReference>
<dbReference type="PANTHER" id="PTHR33603">
    <property type="entry name" value="METHYLTRANSFERASE"/>
    <property type="match status" value="1"/>
</dbReference>
<dbReference type="PANTHER" id="PTHR33603:SF1">
    <property type="entry name" value="RIBOSOMAL RNA LARGE SUBUNIT METHYLTRANSFERASE H"/>
    <property type="match status" value="1"/>
</dbReference>
<dbReference type="Pfam" id="PF02590">
    <property type="entry name" value="SPOUT_MTase"/>
    <property type="match status" value="1"/>
</dbReference>
<dbReference type="PIRSF" id="PIRSF004505">
    <property type="entry name" value="MT_bac"/>
    <property type="match status" value="1"/>
</dbReference>
<dbReference type="SUPFAM" id="SSF75217">
    <property type="entry name" value="alpha/beta knot"/>
    <property type="match status" value="1"/>
</dbReference>
<comment type="function">
    <text evidence="1">Specifically methylates the pseudouridine at position 1915 (m3Psi1915) in 23S rRNA.</text>
</comment>
<comment type="catalytic activity">
    <reaction evidence="1">
        <text>pseudouridine(1915) in 23S rRNA + S-adenosyl-L-methionine = N(3)-methylpseudouridine(1915) in 23S rRNA + S-adenosyl-L-homocysteine + H(+)</text>
        <dbReference type="Rhea" id="RHEA:42752"/>
        <dbReference type="Rhea" id="RHEA-COMP:10221"/>
        <dbReference type="Rhea" id="RHEA-COMP:10222"/>
        <dbReference type="ChEBI" id="CHEBI:15378"/>
        <dbReference type="ChEBI" id="CHEBI:57856"/>
        <dbReference type="ChEBI" id="CHEBI:59789"/>
        <dbReference type="ChEBI" id="CHEBI:65314"/>
        <dbReference type="ChEBI" id="CHEBI:74486"/>
        <dbReference type="EC" id="2.1.1.177"/>
    </reaction>
</comment>
<comment type="subunit">
    <text evidence="1">Homodimer.</text>
</comment>
<comment type="subcellular location">
    <subcellularLocation>
        <location evidence="1">Cytoplasm</location>
    </subcellularLocation>
</comment>
<comment type="similarity">
    <text evidence="1">Belongs to the RNA methyltransferase RlmH family.</text>
</comment>
<name>RLMH_CAMFF</name>
<reference key="1">
    <citation type="submission" date="2006-11" db="EMBL/GenBank/DDBJ databases">
        <title>Sequence of Campylobacter fetus subsp. fetus 82-40.</title>
        <authorList>
            <person name="Fouts D.E."/>
            <person name="Nelson K.E."/>
        </authorList>
    </citation>
    <scope>NUCLEOTIDE SEQUENCE [LARGE SCALE GENOMIC DNA]</scope>
    <source>
        <strain>82-40</strain>
    </source>
</reference>
<proteinExistence type="inferred from homology"/>